<evidence type="ECO:0000255" key="1">
    <source>
        <dbReference type="HAMAP-Rule" id="MF_00248"/>
    </source>
</evidence>
<organism>
    <name type="scientific">Escherichia coli O45:K1 (strain S88 / ExPEC)</name>
    <dbReference type="NCBI Taxonomy" id="585035"/>
    <lineage>
        <taxon>Bacteria</taxon>
        <taxon>Pseudomonadati</taxon>
        <taxon>Pseudomonadota</taxon>
        <taxon>Gammaproteobacteria</taxon>
        <taxon>Enterobacterales</taxon>
        <taxon>Enterobacteriaceae</taxon>
        <taxon>Escherichia</taxon>
    </lineage>
</organism>
<protein>
    <recommendedName>
        <fullName evidence="1">ATP-dependent protease subunit HslV</fullName>
        <ecNumber evidence="1">3.4.25.2</ecNumber>
    </recommendedName>
    <alternativeName>
        <fullName evidence="1">Heat shock protein HslV</fullName>
    </alternativeName>
</protein>
<sequence length="176" mass="19107">MTTIVSVRRNGHVVIAGDGQATLGNTVMKGNVKKVRRLYNDKVIAGFAGGTADAFTLFELFERKLEMHQGHLIKAAVELAKDWRTDRMLRKLEALLAVADETASLIITGNGDVVQPENDLIAIGSGGPYAQAAARALLENTELSAREIAEKALDIAGDICIYTNHFHTIEELSYKA</sequence>
<feature type="chain" id="PRO_1000192680" description="ATP-dependent protease subunit HslV">
    <location>
        <begin position="1"/>
        <end position="176"/>
    </location>
</feature>
<feature type="active site" evidence="1">
    <location>
        <position position="2"/>
    </location>
</feature>
<feature type="binding site" evidence="1">
    <location>
        <position position="157"/>
    </location>
    <ligand>
        <name>Na(+)</name>
        <dbReference type="ChEBI" id="CHEBI:29101"/>
    </ligand>
</feature>
<feature type="binding site" evidence="1">
    <location>
        <position position="160"/>
    </location>
    <ligand>
        <name>Na(+)</name>
        <dbReference type="ChEBI" id="CHEBI:29101"/>
    </ligand>
</feature>
<feature type="binding site" evidence="1">
    <location>
        <position position="163"/>
    </location>
    <ligand>
        <name>Na(+)</name>
        <dbReference type="ChEBI" id="CHEBI:29101"/>
    </ligand>
</feature>
<reference key="1">
    <citation type="journal article" date="2009" name="PLoS Genet.">
        <title>Organised genome dynamics in the Escherichia coli species results in highly diverse adaptive paths.</title>
        <authorList>
            <person name="Touchon M."/>
            <person name="Hoede C."/>
            <person name="Tenaillon O."/>
            <person name="Barbe V."/>
            <person name="Baeriswyl S."/>
            <person name="Bidet P."/>
            <person name="Bingen E."/>
            <person name="Bonacorsi S."/>
            <person name="Bouchier C."/>
            <person name="Bouvet O."/>
            <person name="Calteau A."/>
            <person name="Chiapello H."/>
            <person name="Clermont O."/>
            <person name="Cruveiller S."/>
            <person name="Danchin A."/>
            <person name="Diard M."/>
            <person name="Dossat C."/>
            <person name="Karoui M.E."/>
            <person name="Frapy E."/>
            <person name="Garry L."/>
            <person name="Ghigo J.M."/>
            <person name="Gilles A.M."/>
            <person name="Johnson J."/>
            <person name="Le Bouguenec C."/>
            <person name="Lescat M."/>
            <person name="Mangenot S."/>
            <person name="Martinez-Jehanne V."/>
            <person name="Matic I."/>
            <person name="Nassif X."/>
            <person name="Oztas S."/>
            <person name="Petit M.A."/>
            <person name="Pichon C."/>
            <person name="Rouy Z."/>
            <person name="Ruf C.S."/>
            <person name="Schneider D."/>
            <person name="Tourret J."/>
            <person name="Vacherie B."/>
            <person name="Vallenet D."/>
            <person name="Medigue C."/>
            <person name="Rocha E.P.C."/>
            <person name="Denamur E."/>
        </authorList>
    </citation>
    <scope>NUCLEOTIDE SEQUENCE [LARGE SCALE GENOMIC DNA]</scope>
    <source>
        <strain>S88 / ExPEC</strain>
    </source>
</reference>
<accession>B7MI64</accession>
<comment type="function">
    <text evidence="1">Protease subunit of a proteasome-like degradation complex believed to be a general protein degrading machinery.</text>
</comment>
<comment type="catalytic activity">
    <reaction evidence="1">
        <text>ATP-dependent cleavage of peptide bonds with broad specificity.</text>
        <dbReference type="EC" id="3.4.25.2"/>
    </reaction>
</comment>
<comment type="activity regulation">
    <text evidence="1">Allosterically activated by HslU binding.</text>
</comment>
<comment type="subunit">
    <text evidence="1">A double ring-shaped homohexamer of HslV is capped on each side by a ring-shaped HslU homohexamer. The assembly of the HslU/HslV complex is dependent on binding of ATP.</text>
</comment>
<comment type="subcellular location">
    <subcellularLocation>
        <location evidence="1">Cytoplasm</location>
    </subcellularLocation>
</comment>
<comment type="induction">
    <text evidence="1">By heat shock.</text>
</comment>
<comment type="similarity">
    <text evidence="1">Belongs to the peptidase T1B family. HslV subfamily.</text>
</comment>
<dbReference type="EC" id="3.4.25.2" evidence="1"/>
<dbReference type="EMBL" id="CU928161">
    <property type="protein sequence ID" value="CAR05562.1"/>
    <property type="molecule type" value="Genomic_DNA"/>
</dbReference>
<dbReference type="RefSeq" id="WP_000208235.1">
    <property type="nucleotide sequence ID" value="NC_011742.1"/>
</dbReference>
<dbReference type="SMR" id="B7MI64"/>
<dbReference type="MEROPS" id="T01.006"/>
<dbReference type="KEGG" id="ecz:ECS88_4382"/>
<dbReference type="HOGENOM" id="CLU_093872_1_0_6"/>
<dbReference type="Proteomes" id="UP000000747">
    <property type="component" value="Chromosome"/>
</dbReference>
<dbReference type="GO" id="GO:0009376">
    <property type="term" value="C:HslUV protease complex"/>
    <property type="evidence" value="ECO:0007669"/>
    <property type="project" value="UniProtKB-UniRule"/>
</dbReference>
<dbReference type="GO" id="GO:0005839">
    <property type="term" value="C:proteasome core complex"/>
    <property type="evidence" value="ECO:0007669"/>
    <property type="project" value="InterPro"/>
</dbReference>
<dbReference type="GO" id="GO:0046872">
    <property type="term" value="F:metal ion binding"/>
    <property type="evidence" value="ECO:0007669"/>
    <property type="project" value="UniProtKB-KW"/>
</dbReference>
<dbReference type="GO" id="GO:0004298">
    <property type="term" value="F:threonine-type endopeptidase activity"/>
    <property type="evidence" value="ECO:0007669"/>
    <property type="project" value="UniProtKB-KW"/>
</dbReference>
<dbReference type="GO" id="GO:0051603">
    <property type="term" value="P:proteolysis involved in protein catabolic process"/>
    <property type="evidence" value="ECO:0007669"/>
    <property type="project" value="InterPro"/>
</dbReference>
<dbReference type="CDD" id="cd01913">
    <property type="entry name" value="protease_HslV"/>
    <property type="match status" value="1"/>
</dbReference>
<dbReference type="FunFam" id="3.60.20.10:FF:000002">
    <property type="entry name" value="ATP-dependent protease subunit HslV"/>
    <property type="match status" value="1"/>
</dbReference>
<dbReference type="Gene3D" id="3.60.20.10">
    <property type="entry name" value="Glutamine Phosphoribosylpyrophosphate, subunit 1, domain 1"/>
    <property type="match status" value="1"/>
</dbReference>
<dbReference type="HAMAP" id="MF_00248">
    <property type="entry name" value="HslV"/>
    <property type="match status" value="1"/>
</dbReference>
<dbReference type="InterPro" id="IPR022281">
    <property type="entry name" value="ATP-dep_Prtase_HsIV_su"/>
</dbReference>
<dbReference type="InterPro" id="IPR029055">
    <property type="entry name" value="Ntn_hydrolases_N"/>
</dbReference>
<dbReference type="InterPro" id="IPR001353">
    <property type="entry name" value="Proteasome_sua/b"/>
</dbReference>
<dbReference type="InterPro" id="IPR023333">
    <property type="entry name" value="Proteasome_suB-type"/>
</dbReference>
<dbReference type="NCBIfam" id="TIGR03692">
    <property type="entry name" value="ATP_dep_HslV"/>
    <property type="match status" value="1"/>
</dbReference>
<dbReference type="NCBIfam" id="NF003964">
    <property type="entry name" value="PRK05456.1"/>
    <property type="match status" value="1"/>
</dbReference>
<dbReference type="PANTHER" id="PTHR32194:SF0">
    <property type="entry name" value="ATP-DEPENDENT PROTEASE SUBUNIT HSLV"/>
    <property type="match status" value="1"/>
</dbReference>
<dbReference type="PANTHER" id="PTHR32194">
    <property type="entry name" value="METALLOPROTEASE TLDD"/>
    <property type="match status" value="1"/>
</dbReference>
<dbReference type="Pfam" id="PF00227">
    <property type="entry name" value="Proteasome"/>
    <property type="match status" value="1"/>
</dbReference>
<dbReference type="PIRSF" id="PIRSF039093">
    <property type="entry name" value="HslV"/>
    <property type="match status" value="1"/>
</dbReference>
<dbReference type="SUPFAM" id="SSF56235">
    <property type="entry name" value="N-terminal nucleophile aminohydrolases (Ntn hydrolases)"/>
    <property type="match status" value="1"/>
</dbReference>
<dbReference type="PROSITE" id="PS51476">
    <property type="entry name" value="PROTEASOME_BETA_2"/>
    <property type="match status" value="1"/>
</dbReference>
<gene>
    <name evidence="1" type="primary">hslV</name>
    <name type="ordered locus">ECS88_4382</name>
</gene>
<name>HSLV_ECO45</name>
<proteinExistence type="inferred from homology"/>
<keyword id="KW-0021">Allosteric enzyme</keyword>
<keyword id="KW-0963">Cytoplasm</keyword>
<keyword id="KW-0378">Hydrolase</keyword>
<keyword id="KW-0479">Metal-binding</keyword>
<keyword id="KW-0645">Protease</keyword>
<keyword id="KW-1185">Reference proteome</keyword>
<keyword id="KW-0915">Sodium</keyword>
<keyword id="KW-0346">Stress response</keyword>
<keyword id="KW-0888">Threonine protease</keyword>